<reference key="1">
    <citation type="submission" date="1994-06" db="EMBL/GenBank/DDBJ databases">
        <authorList>
            <person name="Zhou L."/>
        </authorList>
    </citation>
    <scope>NUCLEOTIDE SEQUENCE [MRNA]</scope>
    <source>
        <strain>cv. Jinzhong</strain>
        <tissue>Leaf</tissue>
    </source>
</reference>
<gene>
    <name type="primary">AC1</name>
</gene>
<organism>
    <name type="scientific">Sorghum bicolor</name>
    <name type="common">Sorghum</name>
    <name type="synonym">Sorghum vulgare</name>
    <dbReference type="NCBI Taxonomy" id="4558"/>
    <lineage>
        <taxon>Eukaryota</taxon>
        <taxon>Viridiplantae</taxon>
        <taxon>Streptophyta</taxon>
        <taxon>Embryophyta</taxon>
        <taxon>Tracheophyta</taxon>
        <taxon>Spermatophyta</taxon>
        <taxon>Magnoliopsida</taxon>
        <taxon>Liliopsida</taxon>
        <taxon>Poales</taxon>
        <taxon>Poaceae</taxon>
        <taxon>PACMAD clade</taxon>
        <taxon>Panicoideae</taxon>
        <taxon>Andropogonodae</taxon>
        <taxon>Andropogoneae</taxon>
        <taxon>Sorghinae</taxon>
        <taxon>Sorghum</taxon>
    </lineage>
</organism>
<feature type="chain" id="PRO_0000089021" description="Actin-1">
    <location>
        <begin position="1"/>
        <end position="377"/>
    </location>
</feature>
<proteinExistence type="evidence at transcript level"/>
<comment type="function">
    <text>Actins are highly conserved proteins that are involved in various types of cell motility and are ubiquitously expressed in all eukaryotic cells.</text>
</comment>
<comment type="function">
    <text>Essential component of cell cytoskeleton; plays an important role in cytoplasmic streaming, cell shape determination, cell division, organelle movement and extension growth.</text>
</comment>
<comment type="catalytic activity">
    <reaction evidence="1">
        <text>ATP + H2O = ADP + phosphate + H(+)</text>
        <dbReference type="Rhea" id="RHEA:13065"/>
        <dbReference type="ChEBI" id="CHEBI:15377"/>
        <dbReference type="ChEBI" id="CHEBI:15378"/>
        <dbReference type="ChEBI" id="CHEBI:30616"/>
        <dbReference type="ChEBI" id="CHEBI:43474"/>
        <dbReference type="ChEBI" id="CHEBI:456216"/>
    </reaction>
</comment>
<comment type="subcellular location">
    <subcellularLocation>
        <location>Cytoplasm</location>
        <location>Cytoskeleton</location>
    </subcellularLocation>
</comment>
<comment type="similarity">
    <text evidence="2">Belongs to the actin family.</text>
</comment>
<protein>
    <recommendedName>
        <fullName>Actin-1</fullName>
        <ecNumber evidence="1">3.6.4.-</ecNumber>
    </recommendedName>
</protein>
<keyword id="KW-0067">ATP-binding</keyword>
<keyword id="KW-0963">Cytoplasm</keyword>
<keyword id="KW-0206">Cytoskeleton</keyword>
<keyword id="KW-0378">Hydrolase</keyword>
<keyword id="KW-0547">Nucleotide-binding</keyword>
<dbReference type="EC" id="3.6.4.-" evidence="1"/>
<dbReference type="EMBL" id="X79378">
    <property type="protein sequence ID" value="CAA55923.1"/>
    <property type="molecule type" value="mRNA"/>
</dbReference>
<dbReference type="PIR" id="JE0147">
    <property type="entry name" value="JE0147"/>
</dbReference>
<dbReference type="SMR" id="P53504"/>
<dbReference type="eggNOG" id="KOG0676">
    <property type="taxonomic scope" value="Eukaryota"/>
</dbReference>
<dbReference type="HOGENOM" id="CLU_027965_0_2_1"/>
<dbReference type="ExpressionAtlas" id="P53504">
    <property type="expression patterns" value="baseline and differential"/>
</dbReference>
<dbReference type="GO" id="GO:0005737">
    <property type="term" value="C:cytoplasm"/>
    <property type="evidence" value="ECO:0007669"/>
    <property type="project" value="UniProtKB-KW"/>
</dbReference>
<dbReference type="GO" id="GO:0005856">
    <property type="term" value="C:cytoskeleton"/>
    <property type="evidence" value="ECO:0007669"/>
    <property type="project" value="UniProtKB-SubCell"/>
</dbReference>
<dbReference type="GO" id="GO:0005524">
    <property type="term" value="F:ATP binding"/>
    <property type="evidence" value="ECO:0007669"/>
    <property type="project" value="UniProtKB-KW"/>
</dbReference>
<dbReference type="GO" id="GO:0016787">
    <property type="term" value="F:hydrolase activity"/>
    <property type="evidence" value="ECO:0007669"/>
    <property type="project" value="UniProtKB-KW"/>
</dbReference>
<dbReference type="CDD" id="cd10224">
    <property type="entry name" value="ASKHA_NBD_actin"/>
    <property type="match status" value="1"/>
</dbReference>
<dbReference type="FunFam" id="2.30.36.70:FF:000001">
    <property type="entry name" value="Actin, alpha skeletal muscle"/>
    <property type="match status" value="1"/>
</dbReference>
<dbReference type="FunFam" id="3.30.420.40:FF:000050">
    <property type="entry name" value="Actin, alpha skeletal muscle"/>
    <property type="match status" value="1"/>
</dbReference>
<dbReference type="FunFam" id="3.30.420.40:FF:000205">
    <property type="entry name" value="Actin, alpha skeletal muscle"/>
    <property type="match status" value="1"/>
</dbReference>
<dbReference type="FunFam" id="3.30.420.40:FF:000291">
    <property type="entry name" value="Actin, alpha skeletal muscle"/>
    <property type="match status" value="1"/>
</dbReference>
<dbReference type="FunFam" id="3.90.640.10:FF:000001">
    <property type="entry name" value="Actin, muscle"/>
    <property type="match status" value="1"/>
</dbReference>
<dbReference type="Gene3D" id="3.30.420.40">
    <property type="match status" value="2"/>
</dbReference>
<dbReference type="Gene3D" id="3.90.640.10">
    <property type="entry name" value="Actin, Chain A, domain 4"/>
    <property type="match status" value="1"/>
</dbReference>
<dbReference type="InterPro" id="IPR004000">
    <property type="entry name" value="Actin"/>
</dbReference>
<dbReference type="InterPro" id="IPR020902">
    <property type="entry name" value="Actin/actin-like_CS"/>
</dbReference>
<dbReference type="InterPro" id="IPR004001">
    <property type="entry name" value="Actin_CS"/>
</dbReference>
<dbReference type="InterPro" id="IPR043129">
    <property type="entry name" value="ATPase_NBD"/>
</dbReference>
<dbReference type="PANTHER" id="PTHR11937">
    <property type="entry name" value="ACTIN"/>
    <property type="match status" value="1"/>
</dbReference>
<dbReference type="Pfam" id="PF00022">
    <property type="entry name" value="Actin"/>
    <property type="match status" value="1"/>
</dbReference>
<dbReference type="PRINTS" id="PR00190">
    <property type="entry name" value="ACTIN"/>
</dbReference>
<dbReference type="SMART" id="SM00268">
    <property type="entry name" value="ACTIN"/>
    <property type="match status" value="1"/>
</dbReference>
<dbReference type="SUPFAM" id="SSF53067">
    <property type="entry name" value="Actin-like ATPase domain"/>
    <property type="match status" value="2"/>
</dbReference>
<dbReference type="PROSITE" id="PS00406">
    <property type="entry name" value="ACTINS_1"/>
    <property type="match status" value="1"/>
</dbReference>
<dbReference type="PROSITE" id="PS00432">
    <property type="entry name" value="ACTINS_2"/>
    <property type="match status" value="1"/>
</dbReference>
<dbReference type="PROSITE" id="PS01132">
    <property type="entry name" value="ACTINS_ACT_LIKE"/>
    <property type="match status" value="1"/>
</dbReference>
<sequence>MADAEDIQPLVCDNGTGMVKAGFAGDDAPRAVFPSIVGRPRHTGVMVGMGQKDAYVGDEAQSKRGILTLKYPIEHGIVSNWDDMEKIWHHTFYNELRVAPEEHPVLLTEAPLNPKANREKMTQIMFETFNTPAMYVAIQAVLSLYASGRTTGIVLDSGDGVSHTVPIYEGYALPHAILRLDLAGRDLTDYLMKILTERGYSFTTTAEREIVRDMKEKLAYIALDYDQEMETAKTSSSVEKSYELPDGQVITIAADRFRCPEVLFQPSFIGMEAAGIHETTYNSIMKCDVDIRKDLYGNIVLSGGTTMFPGIADRMRQGNHCLAPSSMKIKVVAPPERKYSVWIGGSILASLSTFQQMWIAKAEYDESGPSIVHRKCF</sequence>
<accession>P53504</accession>
<evidence type="ECO:0000250" key="1">
    <source>
        <dbReference type="UniProtKB" id="P68137"/>
    </source>
</evidence>
<evidence type="ECO:0000305" key="2"/>
<name>ACT1_SORBI</name>